<accession>Q5P0D3</accession>
<name>ACP_AROAE</name>
<feature type="chain" id="PRO_1000066553" description="Acyl carrier protein">
    <location>
        <begin position="1"/>
        <end position="79"/>
    </location>
</feature>
<feature type="domain" description="Carrier" evidence="2">
    <location>
        <begin position="2"/>
        <end position="77"/>
    </location>
</feature>
<feature type="modified residue" description="O-(pantetheine 4'-phosphoryl)serine" evidence="2">
    <location>
        <position position="37"/>
    </location>
</feature>
<keyword id="KW-0963">Cytoplasm</keyword>
<keyword id="KW-0275">Fatty acid biosynthesis</keyword>
<keyword id="KW-0276">Fatty acid metabolism</keyword>
<keyword id="KW-0444">Lipid biosynthesis</keyword>
<keyword id="KW-0443">Lipid metabolism</keyword>
<keyword id="KW-0596">Phosphopantetheine</keyword>
<keyword id="KW-0597">Phosphoprotein</keyword>
<keyword id="KW-1185">Reference proteome</keyword>
<sequence length="79" mass="8914">MENIEQRVKKIVAEQLGVNESEIKTESSFVDDLGADSLDTVELVMALEEEFECEIPDEEAEKITTVQQAIDYVTAHLKK</sequence>
<comment type="function">
    <text evidence="1">Carrier of the growing fatty acid chain in fatty acid biosynthesis.</text>
</comment>
<comment type="pathway">
    <text evidence="1">Lipid metabolism; fatty acid biosynthesis.</text>
</comment>
<comment type="subcellular location">
    <subcellularLocation>
        <location evidence="1">Cytoplasm</location>
    </subcellularLocation>
</comment>
<comment type="PTM">
    <text evidence="1">4'-phosphopantetheine is transferred from CoA to a specific serine of apo-ACP by AcpS. This modification is essential for activity because fatty acids are bound in thioester linkage to the sulfhydryl of the prosthetic group.</text>
</comment>
<comment type="similarity">
    <text evidence="1">Belongs to the acyl carrier protein (ACP) family.</text>
</comment>
<organism>
    <name type="scientific">Aromatoleum aromaticum (strain DSM 19018 / LMG 30748 / EbN1)</name>
    <name type="common">Azoarcus sp. (strain EbN1)</name>
    <dbReference type="NCBI Taxonomy" id="76114"/>
    <lineage>
        <taxon>Bacteria</taxon>
        <taxon>Pseudomonadati</taxon>
        <taxon>Pseudomonadota</taxon>
        <taxon>Betaproteobacteria</taxon>
        <taxon>Rhodocyclales</taxon>
        <taxon>Rhodocyclaceae</taxon>
        <taxon>Aromatoleum</taxon>
    </lineage>
</organism>
<protein>
    <recommendedName>
        <fullName evidence="1">Acyl carrier protein</fullName>
        <shortName evidence="1">ACP</shortName>
    </recommendedName>
</protein>
<evidence type="ECO:0000255" key="1">
    <source>
        <dbReference type="HAMAP-Rule" id="MF_01217"/>
    </source>
</evidence>
<evidence type="ECO:0000255" key="2">
    <source>
        <dbReference type="PROSITE-ProRule" id="PRU00258"/>
    </source>
</evidence>
<gene>
    <name evidence="1" type="primary">acpP</name>
    <name type="ordered locus">AZOSEA31060</name>
    <name type="ORF">ebD12</name>
</gene>
<reference key="1">
    <citation type="journal article" date="2005" name="Arch. Microbiol.">
        <title>The genome sequence of an anaerobic aromatic-degrading denitrifying bacterium, strain EbN1.</title>
        <authorList>
            <person name="Rabus R."/>
            <person name="Kube M."/>
            <person name="Heider J."/>
            <person name="Beck A."/>
            <person name="Heitmann K."/>
            <person name="Widdel F."/>
            <person name="Reinhardt R."/>
        </authorList>
    </citation>
    <scope>NUCLEOTIDE SEQUENCE [LARGE SCALE GENOMIC DNA]</scope>
    <source>
        <strain>DSM 19018 / LMG 30748 / EbN1</strain>
    </source>
</reference>
<proteinExistence type="inferred from homology"/>
<dbReference type="EMBL" id="CR555306">
    <property type="protein sequence ID" value="CAI09231.1"/>
    <property type="molecule type" value="Genomic_DNA"/>
</dbReference>
<dbReference type="RefSeq" id="WP_011238908.1">
    <property type="nucleotide sequence ID" value="NC_006513.1"/>
</dbReference>
<dbReference type="SMR" id="Q5P0D3"/>
<dbReference type="STRING" id="76114.ebD12"/>
<dbReference type="KEGG" id="eba:ebD12"/>
<dbReference type="eggNOG" id="COG0236">
    <property type="taxonomic scope" value="Bacteria"/>
</dbReference>
<dbReference type="HOGENOM" id="CLU_108696_5_1_4"/>
<dbReference type="OrthoDB" id="9804551at2"/>
<dbReference type="UniPathway" id="UPA00094"/>
<dbReference type="Proteomes" id="UP000006552">
    <property type="component" value="Chromosome"/>
</dbReference>
<dbReference type="GO" id="GO:0005829">
    <property type="term" value="C:cytosol"/>
    <property type="evidence" value="ECO:0007669"/>
    <property type="project" value="TreeGrafter"/>
</dbReference>
<dbReference type="GO" id="GO:0016020">
    <property type="term" value="C:membrane"/>
    <property type="evidence" value="ECO:0007669"/>
    <property type="project" value="GOC"/>
</dbReference>
<dbReference type="GO" id="GO:0000035">
    <property type="term" value="F:acyl binding"/>
    <property type="evidence" value="ECO:0007669"/>
    <property type="project" value="TreeGrafter"/>
</dbReference>
<dbReference type="GO" id="GO:0000036">
    <property type="term" value="F:acyl carrier activity"/>
    <property type="evidence" value="ECO:0007669"/>
    <property type="project" value="UniProtKB-UniRule"/>
</dbReference>
<dbReference type="GO" id="GO:0009245">
    <property type="term" value="P:lipid A biosynthetic process"/>
    <property type="evidence" value="ECO:0007669"/>
    <property type="project" value="TreeGrafter"/>
</dbReference>
<dbReference type="FunFam" id="1.10.1200.10:FF:000001">
    <property type="entry name" value="Acyl carrier protein"/>
    <property type="match status" value="1"/>
</dbReference>
<dbReference type="Gene3D" id="1.10.1200.10">
    <property type="entry name" value="ACP-like"/>
    <property type="match status" value="1"/>
</dbReference>
<dbReference type="HAMAP" id="MF_01217">
    <property type="entry name" value="Acyl_carrier"/>
    <property type="match status" value="1"/>
</dbReference>
<dbReference type="InterPro" id="IPR003231">
    <property type="entry name" value="ACP"/>
</dbReference>
<dbReference type="InterPro" id="IPR036736">
    <property type="entry name" value="ACP-like_sf"/>
</dbReference>
<dbReference type="InterPro" id="IPR009081">
    <property type="entry name" value="PP-bd_ACP"/>
</dbReference>
<dbReference type="InterPro" id="IPR006162">
    <property type="entry name" value="Ppantetheine_attach_site"/>
</dbReference>
<dbReference type="NCBIfam" id="TIGR00517">
    <property type="entry name" value="acyl_carrier"/>
    <property type="match status" value="1"/>
</dbReference>
<dbReference type="NCBIfam" id="NF002148">
    <property type="entry name" value="PRK00982.1-2"/>
    <property type="match status" value="1"/>
</dbReference>
<dbReference type="NCBIfam" id="NF002149">
    <property type="entry name" value="PRK00982.1-3"/>
    <property type="match status" value="1"/>
</dbReference>
<dbReference type="NCBIfam" id="NF002150">
    <property type="entry name" value="PRK00982.1-4"/>
    <property type="match status" value="1"/>
</dbReference>
<dbReference type="NCBIfam" id="NF002151">
    <property type="entry name" value="PRK00982.1-5"/>
    <property type="match status" value="1"/>
</dbReference>
<dbReference type="PANTHER" id="PTHR20863">
    <property type="entry name" value="ACYL CARRIER PROTEIN"/>
    <property type="match status" value="1"/>
</dbReference>
<dbReference type="PANTHER" id="PTHR20863:SF76">
    <property type="entry name" value="CARRIER DOMAIN-CONTAINING PROTEIN"/>
    <property type="match status" value="1"/>
</dbReference>
<dbReference type="Pfam" id="PF00550">
    <property type="entry name" value="PP-binding"/>
    <property type="match status" value="1"/>
</dbReference>
<dbReference type="SUPFAM" id="SSF47336">
    <property type="entry name" value="ACP-like"/>
    <property type="match status" value="1"/>
</dbReference>
<dbReference type="PROSITE" id="PS50075">
    <property type="entry name" value="CARRIER"/>
    <property type="match status" value="1"/>
</dbReference>
<dbReference type="PROSITE" id="PS00012">
    <property type="entry name" value="PHOSPHOPANTETHEINE"/>
    <property type="match status" value="1"/>
</dbReference>